<feature type="chain" id="PRO_1000089948" description="Phosphate acyltransferase">
    <location>
        <begin position="1"/>
        <end position="331"/>
    </location>
</feature>
<comment type="function">
    <text evidence="1">Catalyzes the reversible formation of acyl-phosphate (acyl-PO(4)) from acyl-[acyl-carrier-protein] (acyl-ACP). This enzyme utilizes acyl-ACP as fatty acyl donor, but not acyl-CoA.</text>
</comment>
<comment type="catalytic activity">
    <reaction evidence="1">
        <text>a fatty acyl-[ACP] + phosphate = an acyl phosphate + holo-[ACP]</text>
        <dbReference type="Rhea" id="RHEA:42292"/>
        <dbReference type="Rhea" id="RHEA-COMP:9685"/>
        <dbReference type="Rhea" id="RHEA-COMP:14125"/>
        <dbReference type="ChEBI" id="CHEBI:43474"/>
        <dbReference type="ChEBI" id="CHEBI:59918"/>
        <dbReference type="ChEBI" id="CHEBI:64479"/>
        <dbReference type="ChEBI" id="CHEBI:138651"/>
        <dbReference type="EC" id="2.3.1.274"/>
    </reaction>
</comment>
<comment type="pathway">
    <text evidence="1">Lipid metabolism; phospholipid metabolism.</text>
</comment>
<comment type="subunit">
    <text evidence="1">Homodimer. Probably interacts with PlsY.</text>
</comment>
<comment type="subcellular location">
    <subcellularLocation>
        <location evidence="1">Cytoplasm</location>
    </subcellularLocation>
    <text evidence="1">Associated with the membrane possibly through PlsY.</text>
</comment>
<comment type="similarity">
    <text evidence="1">Belongs to the PlsX family.</text>
</comment>
<dbReference type="EC" id="2.3.1.274" evidence="1"/>
<dbReference type="EMBL" id="CP001184">
    <property type="protein sequence ID" value="ACI59823.1"/>
    <property type="molecule type" value="Genomic_DNA"/>
</dbReference>
<dbReference type="RefSeq" id="WP_004025547.1">
    <property type="nucleotide sequence ID" value="NC_011374.1"/>
</dbReference>
<dbReference type="SMR" id="B5ZB12"/>
<dbReference type="STRING" id="565575.UUR10_0197"/>
<dbReference type="GeneID" id="93848678"/>
<dbReference type="KEGG" id="uue:UUR10_0197"/>
<dbReference type="eggNOG" id="COG0416">
    <property type="taxonomic scope" value="Bacteria"/>
</dbReference>
<dbReference type="HOGENOM" id="CLU_039379_1_1_14"/>
<dbReference type="OrthoDB" id="9806408at2"/>
<dbReference type="UniPathway" id="UPA00085"/>
<dbReference type="Proteomes" id="UP000002018">
    <property type="component" value="Chromosome"/>
</dbReference>
<dbReference type="GO" id="GO:0005737">
    <property type="term" value="C:cytoplasm"/>
    <property type="evidence" value="ECO:0007669"/>
    <property type="project" value="UniProtKB-SubCell"/>
</dbReference>
<dbReference type="GO" id="GO:0043811">
    <property type="term" value="F:phosphate:acyl-[acyl carrier protein] acyltransferase activity"/>
    <property type="evidence" value="ECO:0007669"/>
    <property type="project" value="UniProtKB-UniRule"/>
</dbReference>
<dbReference type="GO" id="GO:0006633">
    <property type="term" value="P:fatty acid biosynthetic process"/>
    <property type="evidence" value="ECO:0007669"/>
    <property type="project" value="UniProtKB-UniRule"/>
</dbReference>
<dbReference type="GO" id="GO:0008654">
    <property type="term" value="P:phospholipid biosynthetic process"/>
    <property type="evidence" value="ECO:0007669"/>
    <property type="project" value="UniProtKB-KW"/>
</dbReference>
<dbReference type="Gene3D" id="3.40.718.10">
    <property type="entry name" value="Isopropylmalate Dehydrogenase"/>
    <property type="match status" value="1"/>
</dbReference>
<dbReference type="HAMAP" id="MF_00019">
    <property type="entry name" value="PlsX"/>
    <property type="match status" value="1"/>
</dbReference>
<dbReference type="InterPro" id="IPR003664">
    <property type="entry name" value="FA_synthesis"/>
</dbReference>
<dbReference type="InterPro" id="IPR012281">
    <property type="entry name" value="Phospholipid_synth_PlsX-like"/>
</dbReference>
<dbReference type="NCBIfam" id="TIGR00182">
    <property type="entry name" value="plsX"/>
    <property type="match status" value="1"/>
</dbReference>
<dbReference type="PANTHER" id="PTHR30100">
    <property type="entry name" value="FATTY ACID/PHOSPHOLIPID SYNTHESIS PROTEIN PLSX"/>
    <property type="match status" value="1"/>
</dbReference>
<dbReference type="PANTHER" id="PTHR30100:SF1">
    <property type="entry name" value="PHOSPHATE ACYLTRANSFERASE"/>
    <property type="match status" value="1"/>
</dbReference>
<dbReference type="Pfam" id="PF02504">
    <property type="entry name" value="FA_synthesis"/>
    <property type="match status" value="1"/>
</dbReference>
<dbReference type="PIRSF" id="PIRSF002465">
    <property type="entry name" value="Phsphlp_syn_PlsX"/>
    <property type="match status" value="1"/>
</dbReference>
<dbReference type="SUPFAM" id="SSF53659">
    <property type="entry name" value="Isocitrate/Isopropylmalate dehydrogenase-like"/>
    <property type="match status" value="1"/>
</dbReference>
<accession>B5ZB12</accession>
<protein>
    <recommendedName>
        <fullName evidence="1">Phosphate acyltransferase</fullName>
        <ecNumber evidence="1">2.3.1.274</ecNumber>
    </recommendedName>
    <alternativeName>
        <fullName evidence="1">Acyl-ACP phosphotransacylase</fullName>
    </alternativeName>
    <alternativeName>
        <fullName evidence="1">Acyl-[acyl-carrier-protein]--phosphate acyltransferase</fullName>
    </alternativeName>
    <alternativeName>
        <fullName evidence="1">Phosphate-acyl-ACP acyltransferase</fullName>
    </alternativeName>
</protein>
<evidence type="ECO:0000255" key="1">
    <source>
        <dbReference type="HAMAP-Rule" id="MF_00019"/>
    </source>
</evidence>
<keyword id="KW-0963">Cytoplasm</keyword>
<keyword id="KW-0444">Lipid biosynthesis</keyword>
<keyword id="KW-0443">Lipid metabolism</keyword>
<keyword id="KW-0594">Phospholipid biosynthesis</keyword>
<keyword id="KW-1208">Phospholipid metabolism</keyword>
<keyword id="KW-0808">Transferase</keyword>
<reference key="1">
    <citation type="submission" date="2008-10" db="EMBL/GenBank/DDBJ databases">
        <title>Genome sequence of Ureaplasma urealyticum serovar 10 ATCC-33699.</title>
        <authorList>
            <person name="Shrivastava S."/>
            <person name="Methe B.A."/>
            <person name="Glass J."/>
            <person name="White K."/>
            <person name="Duffy L.B."/>
        </authorList>
    </citation>
    <scope>NUCLEOTIDE SEQUENCE [LARGE SCALE GENOMIC DNA]</scope>
    <source>
        <strain>ATCC 33699 / Western</strain>
    </source>
</reference>
<name>PLSX_UREU1</name>
<sequence length="331" mass="37189">MKKIKILLDTMGYENTLEHVIKAAKDFYYQHEDDLEIILVGNEQLIKPLLDNDWRLFPIVHTEVSIEQNDTILSARKKQNSSMHLALRYLKDKQANGMLTAGNSAVFVYNAYATIGLLEHIKKPAFMPFVPTIDGGVTNLLDVGASIDLDGRDLFNFAIMANTIAKMRTPNPRVGVLNIGTEDHKGLPYHQEANELLKTSNLNYVGFVEPKTILEREVDVLVADGFSGNIALKTMEGVGKTISNFLKNEYKKPKNLFAALLSKPIFKKMKKAFDYKEHAGAFVLGLDGILVKTHGSADYQQFMSALKILYETIKADVLNEIKKDLNNYYGQ</sequence>
<organism>
    <name type="scientific">Ureaplasma urealyticum serovar 10 (strain ATCC 33699 / Western)</name>
    <dbReference type="NCBI Taxonomy" id="565575"/>
    <lineage>
        <taxon>Bacteria</taxon>
        <taxon>Bacillati</taxon>
        <taxon>Mycoplasmatota</taxon>
        <taxon>Mycoplasmoidales</taxon>
        <taxon>Mycoplasmoidaceae</taxon>
        <taxon>Ureaplasma</taxon>
    </lineage>
</organism>
<proteinExistence type="inferred from homology"/>
<gene>
    <name evidence="1" type="primary">plsX</name>
    <name type="ordered locus">UUR10_0197</name>
</gene>